<accession>B6IS04</accession>
<gene>
    <name evidence="1" type="primary">msrA</name>
    <name type="ordered locus">RC1_0809</name>
</gene>
<proteinExistence type="inferred from homology"/>
<protein>
    <recommendedName>
        <fullName evidence="1">Peptide methionine sulfoxide reductase MsrA</fullName>
        <shortName evidence="1">Protein-methionine-S-oxide reductase</shortName>
        <ecNumber evidence="1">1.8.4.11</ecNumber>
    </recommendedName>
    <alternativeName>
        <fullName evidence="1">Peptide-methionine (S)-S-oxide reductase</fullName>
        <shortName evidence="1">Peptide Met(O) reductase</shortName>
    </alternativeName>
</protein>
<keyword id="KW-0560">Oxidoreductase</keyword>
<keyword id="KW-1185">Reference proteome</keyword>
<organism>
    <name type="scientific">Rhodospirillum centenum (strain ATCC 51521 / SW)</name>
    <dbReference type="NCBI Taxonomy" id="414684"/>
    <lineage>
        <taxon>Bacteria</taxon>
        <taxon>Pseudomonadati</taxon>
        <taxon>Pseudomonadota</taxon>
        <taxon>Alphaproteobacteria</taxon>
        <taxon>Rhodospirillales</taxon>
        <taxon>Rhodospirillaceae</taxon>
        <taxon>Rhodospirillum</taxon>
    </lineage>
</organism>
<feature type="chain" id="PRO_1000184569" description="Peptide methionine sulfoxide reductase MsrA">
    <location>
        <begin position="1"/>
        <end position="219"/>
    </location>
</feature>
<feature type="region of interest" description="Disordered" evidence="2">
    <location>
        <begin position="1"/>
        <end position="20"/>
    </location>
</feature>
<feature type="active site" evidence="1">
    <location>
        <position position="55"/>
    </location>
</feature>
<reference key="1">
    <citation type="submission" date="2007-03" db="EMBL/GenBank/DDBJ databases">
        <title>Genome sequence of Rhodospirillum centenum.</title>
        <authorList>
            <person name="Touchman J.W."/>
            <person name="Bauer C."/>
            <person name="Blankenship R.E."/>
        </authorList>
    </citation>
    <scope>NUCLEOTIDE SEQUENCE [LARGE SCALE GENOMIC DNA]</scope>
    <source>
        <strain>ATCC 51521 / SW</strain>
    </source>
</reference>
<evidence type="ECO:0000255" key="1">
    <source>
        <dbReference type="HAMAP-Rule" id="MF_01401"/>
    </source>
</evidence>
<evidence type="ECO:0000256" key="2">
    <source>
        <dbReference type="SAM" id="MobiDB-lite"/>
    </source>
</evidence>
<name>MSRA_RHOCS</name>
<comment type="function">
    <text evidence="1">Has an important function as a repair enzyme for proteins that have been inactivated by oxidation. Catalyzes the reversible oxidation-reduction of methionine sulfoxide in proteins to methionine.</text>
</comment>
<comment type="catalytic activity">
    <reaction evidence="1">
        <text>L-methionyl-[protein] + [thioredoxin]-disulfide + H2O = L-methionyl-(S)-S-oxide-[protein] + [thioredoxin]-dithiol</text>
        <dbReference type="Rhea" id="RHEA:14217"/>
        <dbReference type="Rhea" id="RHEA-COMP:10698"/>
        <dbReference type="Rhea" id="RHEA-COMP:10700"/>
        <dbReference type="Rhea" id="RHEA-COMP:12313"/>
        <dbReference type="Rhea" id="RHEA-COMP:12315"/>
        <dbReference type="ChEBI" id="CHEBI:15377"/>
        <dbReference type="ChEBI" id="CHEBI:16044"/>
        <dbReference type="ChEBI" id="CHEBI:29950"/>
        <dbReference type="ChEBI" id="CHEBI:44120"/>
        <dbReference type="ChEBI" id="CHEBI:50058"/>
        <dbReference type="EC" id="1.8.4.11"/>
    </reaction>
</comment>
<comment type="catalytic activity">
    <reaction evidence="1">
        <text>[thioredoxin]-disulfide + L-methionine + H2O = L-methionine (S)-S-oxide + [thioredoxin]-dithiol</text>
        <dbReference type="Rhea" id="RHEA:19993"/>
        <dbReference type="Rhea" id="RHEA-COMP:10698"/>
        <dbReference type="Rhea" id="RHEA-COMP:10700"/>
        <dbReference type="ChEBI" id="CHEBI:15377"/>
        <dbReference type="ChEBI" id="CHEBI:29950"/>
        <dbReference type="ChEBI" id="CHEBI:50058"/>
        <dbReference type="ChEBI" id="CHEBI:57844"/>
        <dbReference type="ChEBI" id="CHEBI:58772"/>
        <dbReference type="EC" id="1.8.4.11"/>
    </reaction>
</comment>
<comment type="similarity">
    <text evidence="1">Belongs to the MsrA Met sulfoxide reductase family.</text>
</comment>
<dbReference type="EC" id="1.8.4.11" evidence="1"/>
<dbReference type="EMBL" id="CP000613">
    <property type="protein sequence ID" value="ACI98240.1"/>
    <property type="molecule type" value="Genomic_DNA"/>
</dbReference>
<dbReference type="RefSeq" id="WP_012566030.1">
    <property type="nucleotide sequence ID" value="NC_011420.2"/>
</dbReference>
<dbReference type="SMR" id="B6IS04"/>
<dbReference type="STRING" id="414684.RC1_0809"/>
<dbReference type="KEGG" id="rce:RC1_0809"/>
<dbReference type="eggNOG" id="COG0225">
    <property type="taxonomic scope" value="Bacteria"/>
</dbReference>
<dbReference type="HOGENOM" id="CLU_031040_10_3_5"/>
<dbReference type="OrthoDB" id="4174719at2"/>
<dbReference type="Proteomes" id="UP000001591">
    <property type="component" value="Chromosome"/>
</dbReference>
<dbReference type="GO" id="GO:0005737">
    <property type="term" value="C:cytoplasm"/>
    <property type="evidence" value="ECO:0007669"/>
    <property type="project" value="TreeGrafter"/>
</dbReference>
<dbReference type="GO" id="GO:0036456">
    <property type="term" value="F:L-methionine-(S)-S-oxide reductase activity"/>
    <property type="evidence" value="ECO:0007669"/>
    <property type="project" value="TreeGrafter"/>
</dbReference>
<dbReference type="GO" id="GO:0008113">
    <property type="term" value="F:peptide-methionine (S)-S-oxide reductase activity"/>
    <property type="evidence" value="ECO:0007669"/>
    <property type="project" value="UniProtKB-UniRule"/>
</dbReference>
<dbReference type="GO" id="GO:0034599">
    <property type="term" value="P:cellular response to oxidative stress"/>
    <property type="evidence" value="ECO:0007669"/>
    <property type="project" value="TreeGrafter"/>
</dbReference>
<dbReference type="GO" id="GO:0036211">
    <property type="term" value="P:protein modification process"/>
    <property type="evidence" value="ECO:0007669"/>
    <property type="project" value="UniProtKB-UniRule"/>
</dbReference>
<dbReference type="FunFam" id="3.30.1060.10:FF:000001">
    <property type="entry name" value="Peptide methionine sulfoxide reductase MsrA"/>
    <property type="match status" value="1"/>
</dbReference>
<dbReference type="Gene3D" id="3.30.1060.10">
    <property type="entry name" value="Peptide methionine sulphoxide reductase MsrA"/>
    <property type="match status" value="1"/>
</dbReference>
<dbReference type="HAMAP" id="MF_01401">
    <property type="entry name" value="MsrA"/>
    <property type="match status" value="1"/>
</dbReference>
<dbReference type="InterPro" id="IPR002569">
    <property type="entry name" value="Met_Sox_Rdtase_MsrA_dom"/>
</dbReference>
<dbReference type="InterPro" id="IPR036509">
    <property type="entry name" value="Met_Sox_Rdtase_MsrA_sf"/>
</dbReference>
<dbReference type="InterPro" id="IPR050162">
    <property type="entry name" value="MsrA_MetSO_reductase"/>
</dbReference>
<dbReference type="NCBIfam" id="TIGR00401">
    <property type="entry name" value="msrA"/>
    <property type="match status" value="1"/>
</dbReference>
<dbReference type="PANTHER" id="PTHR42799">
    <property type="entry name" value="MITOCHONDRIAL PEPTIDE METHIONINE SULFOXIDE REDUCTASE"/>
    <property type="match status" value="1"/>
</dbReference>
<dbReference type="PANTHER" id="PTHR42799:SF2">
    <property type="entry name" value="MITOCHONDRIAL PEPTIDE METHIONINE SULFOXIDE REDUCTASE"/>
    <property type="match status" value="1"/>
</dbReference>
<dbReference type="Pfam" id="PF01625">
    <property type="entry name" value="PMSR"/>
    <property type="match status" value="1"/>
</dbReference>
<dbReference type="SUPFAM" id="SSF55068">
    <property type="entry name" value="Peptide methionine sulfoxide reductase"/>
    <property type="match status" value="1"/>
</dbReference>
<sequence>MGLFRSPRQNLPTAADALPGRAEPLPVGNIHAVNGHPLKPPFPAGLETAVFGMGCFWGVERKFWQVPGVYSTAAGYAGGPTPNPTYEEVCTGRTGHAEVVLVVYDPATVSYAELLKVFWENHDPTQGMRQGNDVGTQYRSAIYATTPEQLRLAEASRDSYASRLKAQGYGAVTTEIREAPAFYYAEDYHQQYLHKKPWGYCGLGGTGVSCPLPTGVAAD</sequence>